<dbReference type="EMBL" id="AF303741">
    <property type="protein sequence ID" value="AAK82114.1"/>
    <property type="molecule type" value="Genomic_DNA"/>
</dbReference>
<dbReference type="RefSeq" id="NP_149716.1">
    <property type="nucleotide sequence ID" value="NC_003038.1"/>
</dbReference>
<dbReference type="KEGG" id="vg:1733394"/>
<dbReference type="OrthoDB" id="32863at10239"/>
<dbReference type="Proteomes" id="UP000001359">
    <property type="component" value="Genome"/>
</dbReference>
<protein>
    <recommendedName>
        <fullName>Uncharacterized protein 253L</fullName>
    </recommendedName>
</protein>
<reference key="1">
    <citation type="journal article" date="2001" name="Virology">
        <title>Analysis of the first complete DNA sequence of an invertebrate iridovirus: coding strategy of the genome of Chilo iridescent virus.</title>
        <authorList>
            <person name="Jakob N.J."/>
            <person name="Mueller K."/>
            <person name="Bahr U."/>
            <person name="Darai G."/>
        </authorList>
    </citation>
    <scope>NUCLEOTIDE SEQUENCE [LARGE SCALE GENOMIC DNA]</scope>
</reference>
<reference key="2">
    <citation type="journal article" date="2007" name="Virol. J.">
        <title>Comparative genomic analysis of the family Iridoviridae: re-annotating and defining the core set of iridovirus genes.</title>
        <authorList>
            <person name="Eaton H.E."/>
            <person name="Metcalf J."/>
            <person name="Penny E."/>
            <person name="Tcherepanov V."/>
            <person name="Upton C."/>
            <person name="Brunetti C.R."/>
        </authorList>
    </citation>
    <scope>GENOME REANNOTATION</scope>
</reference>
<feature type="chain" id="PRO_0000377833" description="Uncharacterized protein 253L">
    <location>
        <begin position="1"/>
        <end position="166"/>
    </location>
</feature>
<name>253L_IIV6</name>
<organism>
    <name type="scientific">Invertebrate iridescent virus 6</name>
    <name type="common">IIV-6</name>
    <name type="synonym">Chilo iridescent virus</name>
    <dbReference type="NCBI Taxonomy" id="176652"/>
    <lineage>
        <taxon>Viruses</taxon>
        <taxon>Varidnaviria</taxon>
        <taxon>Bamfordvirae</taxon>
        <taxon>Nucleocytoviricota</taxon>
        <taxon>Megaviricetes</taxon>
        <taxon>Pimascovirales</taxon>
        <taxon>Iridoviridae</taxon>
        <taxon>Betairidovirinae</taxon>
        <taxon>Iridovirus</taxon>
    </lineage>
</organism>
<accession>Q91FR9</accession>
<proteinExistence type="predicted"/>
<keyword id="KW-1185">Reference proteome</keyword>
<sequence>MVKTLIFKTIKDYSFIKGKLQEIINEHDSGPLSESGNIILVNNPKLHLFTSTFKEDDVRFLEVIKLFNKIDELQYLNGKIKSSENNYGDIVIYFTPTKEQKQYIDQILKLEGLKKNPVALTIGTIKENFNISMEKREAGLKVLMRKVYSFFRGKKITFDEAQSITF</sequence>
<organismHost>
    <name type="scientific">Acheta domesticus</name>
    <name type="common">House cricket</name>
    <dbReference type="NCBI Taxonomy" id="6997"/>
</organismHost>
<organismHost>
    <name type="scientific">Chilo suppressalis</name>
    <name type="common">Asiatic rice borer moth</name>
    <dbReference type="NCBI Taxonomy" id="168631"/>
</organismHost>
<organismHost>
    <name type="scientific">Gryllus bimaculatus</name>
    <name type="common">Two-spotted cricket</name>
    <dbReference type="NCBI Taxonomy" id="6999"/>
</organismHost>
<organismHost>
    <name type="scientific">Gryllus campestris</name>
    <dbReference type="NCBI Taxonomy" id="58607"/>
</organismHost>
<organismHost>
    <name type="scientific">Spodoptera frugiperda</name>
    <name type="common">Fall armyworm</name>
    <dbReference type="NCBI Taxonomy" id="7108"/>
</organismHost>
<gene>
    <name type="ORF">IIV6-253L</name>
</gene>